<dbReference type="EC" id="6.3.5.5" evidence="1"/>
<dbReference type="EMBL" id="BX936398">
    <property type="protein sequence ID" value="CAH19863.1"/>
    <property type="molecule type" value="Genomic_DNA"/>
</dbReference>
<dbReference type="RefSeq" id="WP_002224759.1">
    <property type="nucleotide sequence ID" value="NZ_CP009712.1"/>
</dbReference>
<dbReference type="SMR" id="Q66ER8"/>
<dbReference type="MEROPS" id="C26.954"/>
<dbReference type="GeneID" id="57974129"/>
<dbReference type="KEGG" id="ypo:BZ17_1933"/>
<dbReference type="KEGG" id="yps:YPTB0623"/>
<dbReference type="PATRIC" id="fig|273123.14.peg.2056"/>
<dbReference type="UniPathway" id="UPA00068">
    <property type="reaction ID" value="UER00171"/>
</dbReference>
<dbReference type="UniPathway" id="UPA00070">
    <property type="reaction ID" value="UER00115"/>
</dbReference>
<dbReference type="Proteomes" id="UP000001011">
    <property type="component" value="Chromosome"/>
</dbReference>
<dbReference type="GO" id="GO:0005524">
    <property type="term" value="F:ATP binding"/>
    <property type="evidence" value="ECO:0007669"/>
    <property type="project" value="UniProtKB-UniRule"/>
</dbReference>
<dbReference type="GO" id="GO:0004088">
    <property type="term" value="F:carbamoyl-phosphate synthase (glutamine-hydrolyzing) activity"/>
    <property type="evidence" value="ECO:0007669"/>
    <property type="project" value="UniProtKB-UniRule"/>
</dbReference>
<dbReference type="GO" id="GO:0004359">
    <property type="term" value="F:glutaminase activity"/>
    <property type="evidence" value="ECO:0007669"/>
    <property type="project" value="RHEA"/>
</dbReference>
<dbReference type="GO" id="GO:0006207">
    <property type="term" value="P:'de novo' pyrimidine nucleobase biosynthetic process"/>
    <property type="evidence" value="ECO:0007669"/>
    <property type="project" value="InterPro"/>
</dbReference>
<dbReference type="GO" id="GO:0044205">
    <property type="term" value="P:'de novo' UMP biosynthetic process"/>
    <property type="evidence" value="ECO:0007669"/>
    <property type="project" value="UniProtKB-UniRule"/>
</dbReference>
<dbReference type="GO" id="GO:0006541">
    <property type="term" value="P:glutamine metabolic process"/>
    <property type="evidence" value="ECO:0007669"/>
    <property type="project" value="InterPro"/>
</dbReference>
<dbReference type="GO" id="GO:0006526">
    <property type="term" value="P:L-arginine biosynthetic process"/>
    <property type="evidence" value="ECO:0007669"/>
    <property type="project" value="UniProtKB-UniRule"/>
</dbReference>
<dbReference type="CDD" id="cd01744">
    <property type="entry name" value="GATase1_CPSase"/>
    <property type="match status" value="1"/>
</dbReference>
<dbReference type="FunFam" id="3.40.50.880:FF:000011">
    <property type="entry name" value="Carbamoyl-phosphate synthase small chain"/>
    <property type="match status" value="1"/>
</dbReference>
<dbReference type="FunFam" id="3.50.30.20:FF:000001">
    <property type="entry name" value="Carbamoyl-phosphate synthase small chain"/>
    <property type="match status" value="1"/>
</dbReference>
<dbReference type="Gene3D" id="3.40.50.880">
    <property type="match status" value="1"/>
</dbReference>
<dbReference type="Gene3D" id="3.50.30.20">
    <property type="entry name" value="Carbamoyl-phosphate synthase small subunit, N-terminal domain"/>
    <property type="match status" value="1"/>
</dbReference>
<dbReference type="HAMAP" id="MF_01209">
    <property type="entry name" value="CPSase_S_chain"/>
    <property type="match status" value="1"/>
</dbReference>
<dbReference type="InterPro" id="IPR050472">
    <property type="entry name" value="Anth_synth/Amidotransfase"/>
</dbReference>
<dbReference type="InterPro" id="IPR006274">
    <property type="entry name" value="CarbamoylP_synth_ssu"/>
</dbReference>
<dbReference type="InterPro" id="IPR002474">
    <property type="entry name" value="CarbamoylP_synth_ssu_N"/>
</dbReference>
<dbReference type="InterPro" id="IPR036480">
    <property type="entry name" value="CarbP_synth_ssu_N_sf"/>
</dbReference>
<dbReference type="InterPro" id="IPR029062">
    <property type="entry name" value="Class_I_gatase-like"/>
</dbReference>
<dbReference type="InterPro" id="IPR035686">
    <property type="entry name" value="CPSase_GATase1"/>
</dbReference>
<dbReference type="InterPro" id="IPR017926">
    <property type="entry name" value="GATASE"/>
</dbReference>
<dbReference type="NCBIfam" id="TIGR01368">
    <property type="entry name" value="CPSaseIIsmall"/>
    <property type="match status" value="1"/>
</dbReference>
<dbReference type="NCBIfam" id="NF009475">
    <property type="entry name" value="PRK12838.1"/>
    <property type="match status" value="1"/>
</dbReference>
<dbReference type="PANTHER" id="PTHR43418:SF7">
    <property type="entry name" value="CARBAMOYL-PHOSPHATE SYNTHASE SMALL CHAIN"/>
    <property type="match status" value="1"/>
</dbReference>
<dbReference type="PANTHER" id="PTHR43418">
    <property type="entry name" value="MULTIFUNCTIONAL TRYPTOPHAN BIOSYNTHESIS PROTEIN-RELATED"/>
    <property type="match status" value="1"/>
</dbReference>
<dbReference type="Pfam" id="PF00988">
    <property type="entry name" value="CPSase_sm_chain"/>
    <property type="match status" value="1"/>
</dbReference>
<dbReference type="Pfam" id="PF00117">
    <property type="entry name" value="GATase"/>
    <property type="match status" value="1"/>
</dbReference>
<dbReference type="PRINTS" id="PR00097">
    <property type="entry name" value="ANTSNTHASEII"/>
</dbReference>
<dbReference type="PRINTS" id="PR00099">
    <property type="entry name" value="CPSGATASE"/>
</dbReference>
<dbReference type="PRINTS" id="PR00096">
    <property type="entry name" value="GATASE"/>
</dbReference>
<dbReference type="SMART" id="SM01097">
    <property type="entry name" value="CPSase_sm_chain"/>
    <property type="match status" value="1"/>
</dbReference>
<dbReference type="SUPFAM" id="SSF52021">
    <property type="entry name" value="Carbamoyl phosphate synthetase, small subunit N-terminal domain"/>
    <property type="match status" value="1"/>
</dbReference>
<dbReference type="SUPFAM" id="SSF52317">
    <property type="entry name" value="Class I glutamine amidotransferase-like"/>
    <property type="match status" value="1"/>
</dbReference>
<dbReference type="PROSITE" id="PS51273">
    <property type="entry name" value="GATASE_TYPE_1"/>
    <property type="match status" value="1"/>
</dbReference>
<reference key="1">
    <citation type="journal article" date="2004" name="Proc. Natl. Acad. Sci. U.S.A.">
        <title>Insights into the evolution of Yersinia pestis through whole-genome comparison with Yersinia pseudotuberculosis.</title>
        <authorList>
            <person name="Chain P.S.G."/>
            <person name="Carniel E."/>
            <person name="Larimer F.W."/>
            <person name="Lamerdin J."/>
            <person name="Stoutland P.O."/>
            <person name="Regala W.M."/>
            <person name="Georgescu A.M."/>
            <person name="Vergez L.M."/>
            <person name="Land M.L."/>
            <person name="Motin V.L."/>
            <person name="Brubaker R.R."/>
            <person name="Fowler J."/>
            <person name="Hinnebusch J."/>
            <person name="Marceau M."/>
            <person name="Medigue C."/>
            <person name="Simonet M."/>
            <person name="Chenal-Francisque V."/>
            <person name="Souza B."/>
            <person name="Dacheux D."/>
            <person name="Elliott J.M."/>
            <person name="Derbise A."/>
            <person name="Hauser L.J."/>
            <person name="Garcia E."/>
        </authorList>
    </citation>
    <scope>NUCLEOTIDE SEQUENCE [LARGE SCALE GENOMIC DNA]</scope>
    <source>
        <strain>IP32953</strain>
    </source>
</reference>
<protein>
    <recommendedName>
        <fullName evidence="1">Carbamoyl phosphate synthase small chain</fullName>
        <ecNumber evidence="1">6.3.5.5</ecNumber>
    </recommendedName>
    <alternativeName>
        <fullName evidence="1">Carbamoyl phosphate synthetase glutamine chain</fullName>
    </alternativeName>
</protein>
<proteinExistence type="inferred from homology"/>
<sequence>MIKSALLVLEDGTQFHGRAIGAEGTAVGEVVFNTSMTGYQEILTDPSYSRQIVTLTYPHIGNVGTNASDEESSAVHAQGLVIRDLPLIASNYRNEEGLSEYLKRHNIVAIADIDTRKLTRLLREKGAQNGCIIVGELSDAALALEKAKAFPGLKGMDLAKEVTTKEMYQWLQGSWTLEGDLPAAKQPEDLPFHVVAYDYGVKRNILRMLVDRGCRLTVVPAQTPAEDVLKLNPDGIFLSNGPGDPEPCDYAITAIKRFLETDIPVFGICLGHQLLALASGAKTVKMKFGHHGGNHPVKDLDASCVMITAQNHGFAVDETSLPSNLRTTHVSLFDGSLQGLHRTDKAAFSFQGHPEASPGPHDAAPLFDHFIELIEAYRASSVSLNCSNSHK</sequence>
<comment type="function">
    <text evidence="1">Small subunit of the glutamine-dependent carbamoyl phosphate synthetase (CPSase). CPSase catalyzes the formation of carbamoyl phosphate from the ammonia moiety of glutamine, carbonate, and phosphate donated by ATP, constituting the first step of 2 biosynthetic pathways, one leading to arginine and/or urea and the other to pyrimidine nucleotides. The small subunit (glutamine amidotransferase) binds and cleaves glutamine to supply the large subunit with the substrate ammonia.</text>
</comment>
<comment type="catalytic activity">
    <reaction evidence="1">
        <text>hydrogencarbonate + L-glutamine + 2 ATP + H2O = carbamoyl phosphate + L-glutamate + 2 ADP + phosphate + 2 H(+)</text>
        <dbReference type="Rhea" id="RHEA:18633"/>
        <dbReference type="ChEBI" id="CHEBI:15377"/>
        <dbReference type="ChEBI" id="CHEBI:15378"/>
        <dbReference type="ChEBI" id="CHEBI:17544"/>
        <dbReference type="ChEBI" id="CHEBI:29985"/>
        <dbReference type="ChEBI" id="CHEBI:30616"/>
        <dbReference type="ChEBI" id="CHEBI:43474"/>
        <dbReference type="ChEBI" id="CHEBI:58228"/>
        <dbReference type="ChEBI" id="CHEBI:58359"/>
        <dbReference type="ChEBI" id="CHEBI:456216"/>
        <dbReference type="EC" id="6.3.5.5"/>
    </reaction>
</comment>
<comment type="catalytic activity">
    <molecule>Carbamoyl phosphate synthase small chain</molecule>
    <reaction evidence="1">
        <text>L-glutamine + H2O = L-glutamate + NH4(+)</text>
        <dbReference type="Rhea" id="RHEA:15889"/>
        <dbReference type="ChEBI" id="CHEBI:15377"/>
        <dbReference type="ChEBI" id="CHEBI:28938"/>
        <dbReference type="ChEBI" id="CHEBI:29985"/>
        <dbReference type="ChEBI" id="CHEBI:58359"/>
    </reaction>
</comment>
<comment type="pathway">
    <text evidence="1">Amino-acid biosynthesis; L-arginine biosynthesis; carbamoyl phosphate from bicarbonate: step 1/1.</text>
</comment>
<comment type="pathway">
    <text evidence="1">Pyrimidine metabolism; UMP biosynthesis via de novo pathway; (S)-dihydroorotate from bicarbonate: step 1/3.</text>
</comment>
<comment type="subunit">
    <text evidence="1">Composed of two chains; the small (or glutamine) chain promotes the hydrolysis of glutamine to ammonia, which is used by the large (or ammonia) chain to synthesize carbamoyl phosphate. Tetramer of heterodimers (alpha,beta)4.</text>
</comment>
<comment type="similarity">
    <text evidence="1">Belongs to the CarA family.</text>
</comment>
<gene>
    <name evidence="1" type="primary">carA</name>
    <name type="ordered locus">YPTB0623</name>
</gene>
<evidence type="ECO:0000255" key="1">
    <source>
        <dbReference type="HAMAP-Rule" id="MF_01209"/>
    </source>
</evidence>
<organism>
    <name type="scientific">Yersinia pseudotuberculosis serotype I (strain IP32953)</name>
    <dbReference type="NCBI Taxonomy" id="273123"/>
    <lineage>
        <taxon>Bacteria</taxon>
        <taxon>Pseudomonadati</taxon>
        <taxon>Pseudomonadota</taxon>
        <taxon>Gammaproteobacteria</taxon>
        <taxon>Enterobacterales</taxon>
        <taxon>Yersiniaceae</taxon>
        <taxon>Yersinia</taxon>
    </lineage>
</organism>
<keyword id="KW-0028">Amino-acid biosynthesis</keyword>
<keyword id="KW-0055">Arginine biosynthesis</keyword>
<keyword id="KW-0067">ATP-binding</keyword>
<keyword id="KW-0315">Glutamine amidotransferase</keyword>
<keyword id="KW-0436">Ligase</keyword>
<keyword id="KW-0547">Nucleotide-binding</keyword>
<keyword id="KW-0665">Pyrimidine biosynthesis</keyword>
<feature type="chain" id="PRO_0000112353" description="Carbamoyl phosphate synthase small chain">
    <location>
        <begin position="1"/>
        <end position="391"/>
    </location>
</feature>
<feature type="domain" description="Glutamine amidotransferase type-1" evidence="1">
    <location>
        <begin position="193"/>
        <end position="380"/>
    </location>
</feature>
<feature type="region of interest" description="CPSase" evidence="1">
    <location>
        <begin position="1"/>
        <end position="189"/>
    </location>
</feature>
<feature type="active site" description="Nucleophile" evidence="1">
    <location>
        <position position="269"/>
    </location>
</feature>
<feature type="active site" evidence="1">
    <location>
        <position position="353"/>
    </location>
</feature>
<feature type="active site" evidence="1">
    <location>
        <position position="355"/>
    </location>
</feature>
<feature type="binding site" evidence="1">
    <location>
        <position position="47"/>
    </location>
    <ligand>
        <name>L-glutamine</name>
        <dbReference type="ChEBI" id="CHEBI:58359"/>
    </ligand>
</feature>
<feature type="binding site" evidence="1">
    <location>
        <position position="241"/>
    </location>
    <ligand>
        <name>L-glutamine</name>
        <dbReference type="ChEBI" id="CHEBI:58359"/>
    </ligand>
</feature>
<feature type="binding site" evidence="1">
    <location>
        <position position="243"/>
    </location>
    <ligand>
        <name>L-glutamine</name>
        <dbReference type="ChEBI" id="CHEBI:58359"/>
    </ligand>
</feature>
<feature type="binding site" evidence="1">
    <location>
        <position position="270"/>
    </location>
    <ligand>
        <name>L-glutamine</name>
        <dbReference type="ChEBI" id="CHEBI:58359"/>
    </ligand>
</feature>
<feature type="binding site" evidence="1">
    <location>
        <position position="273"/>
    </location>
    <ligand>
        <name>L-glutamine</name>
        <dbReference type="ChEBI" id="CHEBI:58359"/>
    </ligand>
</feature>
<feature type="binding site" evidence="1">
    <location>
        <position position="311"/>
    </location>
    <ligand>
        <name>L-glutamine</name>
        <dbReference type="ChEBI" id="CHEBI:58359"/>
    </ligand>
</feature>
<feature type="binding site" evidence="1">
    <location>
        <position position="313"/>
    </location>
    <ligand>
        <name>L-glutamine</name>
        <dbReference type="ChEBI" id="CHEBI:58359"/>
    </ligand>
</feature>
<feature type="binding site" evidence="1">
    <location>
        <position position="314"/>
    </location>
    <ligand>
        <name>L-glutamine</name>
        <dbReference type="ChEBI" id="CHEBI:58359"/>
    </ligand>
</feature>
<name>CARA_YERPS</name>
<accession>Q66ER8</accession>